<dbReference type="EMBL" id="AY043465">
    <property type="protein sequence ID" value="AAK91778.1"/>
    <property type="molecule type" value="mRNA"/>
</dbReference>
<dbReference type="EMBL" id="AF319438">
    <property type="protein sequence ID" value="AAK01402.1"/>
    <property type="molecule type" value="mRNA"/>
</dbReference>
<dbReference type="EMBL" id="AF319439">
    <property type="protein sequence ID" value="AAK01403.1"/>
    <property type="molecule type" value="mRNA"/>
</dbReference>
<dbReference type="EMBL" id="AF319440">
    <property type="protein sequence ID" value="AAK01404.1"/>
    <property type="molecule type" value="mRNA"/>
</dbReference>
<dbReference type="EMBL" id="AF459633">
    <property type="protein sequence ID" value="AAL60249.1"/>
    <property type="molecule type" value="mRNA"/>
</dbReference>
<dbReference type="EMBL" id="AF390037">
    <property type="protein sequence ID" value="AAM12152.1"/>
    <property type="molecule type" value="mRNA"/>
</dbReference>
<dbReference type="EMBL" id="EF064733">
    <property type="protein sequence ID" value="ABK41916.1"/>
    <property type="molecule type" value="Genomic_DNA"/>
</dbReference>
<dbReference type="EMBL" id="AY358130">
    <property type="protein sequence ID" value="AAQ88497.1"/>
    <property type="molecule type" value="mRNA"/>
</dbReference>
<dbReference type="EMBL" id="AL356276">
    <property type="status" value="NOT_ANNOTATED_CDS"/>
    <property type="molecule type" value="Genomic_DNA"/>
</dbReference>
<dbReference type="EMBL" id="CH471121">
    <property type="protein sequence ID" value="EAW52864.1"/>
    <property type="molecule type" value="Genomic_DNA"/>
</dbReference>
<dbReference type="EMBL" id="CH471121">
    <property type="protein sequence ID" value="EAW52867.1"/>
    <property type="molecule type" value="Genomic_DNA"/>
</dbReference>
<dbReference type="EMBL" id="CH471121">
    <property type="protein sequence ID" value="EAW52869.1"/>
    <property type="molecule type" value="Genomic_DNA"/>
</dbReference>
<dbReference type="EMBL" id="BC069185">
    <property type="protein sequence ID" value="AAH69185.1"/>
    <property type="molecule type" value="mRNA"/>
</dbReference>
<dbReference type="EMBL" id="BC129836">
    <property type="protein sequence ID" value="AAI29837.1"/>
    <property type="molecule type" value="mRNA"/>
</dbReference>
<dbReference type="CCDS" id="CCDS1168.1">
    <molecule id="Q96LA5-1"/>
</dbReference>
<dbReference type="PIR" id="JC7593">
    <property type="entry name" value="JC7593"/>
</dbReference>
<dbReference type="RefSeq" id="NP_001152960.1">
    <property type="nucleotide sequence ID" value="NM_001159488.1"/>
</dbReference>
<dbReference type="RefSeq" id="NP_110391.2">
    <molecule id="Q96LA5-1"/>
    <property type="nucleotide sequence ID" value="NM_030764.3"/>
</dbReference>
<dbReference type="SMR" id="Q96LA5"/>
<dbReference type="BioGRID" id="122656">
    <property type="interactions" value="11"/>
</dbReference>
<dbReference type="FunCoup" id="Q96LA5">
    <property type="interactions" value="3"/>
</dbReference>
<dbReference type="IntAct" id="Q96LA5">
    <property type="interactions" value="9"/>
</dbReference>
<dbReference type="STRING" id="9606.ENSP00000355157"/>
<dbReference type="GlyCosmos" id="Q96LA5">
    <property type="glycosylation" value="5 sites, No reported glycans"/>
</dbReference>
<dbReference type="GlyGen" id="Q96LA5">
    <property type="glycosylation" value="6 sites"/>
</dbReference>
<dbReference type="iPTMnet" id="Q96LA5"/>
<dbReference type="PhosphoSitePlus" id="Q96LA5"/>
<dbReference type="BioMuta" id="FCRL2"/>
<dbReference type="DMDM" id="68052374"/>
<dbReference type="MassIVE" id="Q96LA5"/>
<dbReference type="PaxDb" id="9606-ENSP00000355157"/>
<dbReference type="PeptideAtlas" id="Q96LA5"/>
<dbReference type="ProteomicsDB" id="77172">
    <molecule id="Q96LA5-1"/>
</dbReference>
<dbReference type="ProteomicsDB" id="77173">
    <molecule id="Q96LA5-2"/>
</dbReference>
<dbReference type="ProteomicsDB" id="77174">
    <molecule id="Q96LA5-3"/>
</dbReference>
<dbReference type="ProteomicsDB" id="77175">
    <molecule id="Q96LA5-4"/>
</dbReference>
<dbReference type="TopDownProteomics" id="Q96LA5-1">
    <molecule id="Q96LA5-1"/>
</dbReference>
<dbReference type="Antibodypedia" id="34233">
    <property type="antibodies" value="123 antibodies from 21 providers"/>
</dbReference>
<dbReference type="DNASU" id="79368"/>
<dbReference type="Ensembl" id="ENST00000361516.8">
    <molecule id="Q96LA5-1"/>
    <property type="protein sequence ID" value="ENSP00000355157.3"/>
    <property type="gene ID" value="ENSG00000132704.16"/>
</dbReference>
<dbReference type="Ensembl" id="ENST00000368181.4">
    <molecule id="Q96LA5-5"/>
    <property type="protein sequence ID" value="ENSP00000357163.4"/>
    <property type="gene ID" value="ENSG00000132704.16"/>
</dbReference>
<dbReference type="Ensembl" id="ENST00000469986.1">
    <molecule id="Q96LA5-3"/>
    <property type="protein sequence ID" value="ENSP00000417393.1"/>
    <property type="gene ID" value="ENSG00000132704.16"/>
</dbReference>
<dbReference type="GeneID" id="79368"/>
<dbReference type="KEGG" id="hsa:79368"/>
<dbReference type="MANE-Select" id="ENST00000361516.8">
    <property type="protein sequence ID" value="ENSP00000355157.3"/>
    <property type="RefSeq nucleotide sequence ID" value="NM_030764.4"/>
    <property type="RefSeq protein sequence ID" value="NP_110391.2"/>
</dbReference>
<dbReference type="UCSC" id="uc001fre.3">
    <molecule id="Q96LA5-1"/>
    <property type="organism name" value="human"/>
</dbReference>
<dbReference type="AGR" id="HGNC:14875"/>
<dbReference type="CTD" id="79368"/>
<dbReference type="DisGeNET" id="79368"/>
<dbReference type="GeneCards" id="FCRL2"/>
<dbReference type="HGNC" id="HGNC:14875">
    <property type="gene designation" value="FCRL2"/>
</dbReference>
<dbReference type="HPA" id="ENSG00000132704">
    <property type="expression patterns" value="Group enriched (intestine, lymphoid tissue)"/>
</dbReference>
<dbReference type="MIM" id="606509">
    <property type="type" value="gene"/>
</dbReference>
<dbReference type="neXtProt" id="NX_Q96LA5"/>
<dbReference type="OpenTargets" id="ENSG00000132704"/>
<dbReference type="PharmGKB" id="PA37913"/>
<dbReference type="VEuPathDB" id="HostDB:ENSG00000132704"/>
<dbReference type="eggNOG" id="ENOG502S65W">
    <property type="taxonomic scope" value="Eukaryota"/>
</dbReference>
<dbReference type="GeneTree" id="ENSGT01050000244808"/>
<dbReference type="HOGENOM" id="CLU_023383_6_2_1"/>
<dbReference type="InParanoid" id="Q96LA5"/>
<dbReference type="OMA" id="HNQFIYS"/>
<dbReference type="OrthoDB" id="10012075at2759"/>
<dbReference type="PAN-GO" id="Q96LA5">
    <property type="GO annotations" value="3 GO annotations based on evolutionary models"/>
</dbReference>
<dbReference type="PhylomeDB" id="Q96LA5"/>
<dbReference type="TreeFam" id="TF351107"/>
<dbReference type="PathwayCommons" id="Q96LA5"/>
<dbReference type="SignaLink" id="Q96LA5"/>
<dbReference type="SIGNOR" id="Q96LA5"/>
<dbReference type="BioGRID-ORCS" id="79368">
    <property type="hits" value="6 hits in 1152 CRISPR screens"/>
</dbReference>
<dbReference type="GeneWiki" id="FCRL2"/>
<dbReference type="GenomeRNAi" id="79368"/>
<dbReference type="Pharos" id="Q96LA5">
    <property type="development level" value="Tbio"/>
</dbReference>
<dbReference type="PRO" id="PR:Q96LA5"/>
<dbReference type="Proteomes" id="UP000005640">
    <property type="component" value="Chromosome 1"/>
</dbReference>
<dbReference type="RNAct" id="Q96LA5">
    <property type="molecule type" value="protein"/>
</dbReference>
<dbReference type="Bgee" id="ENSG00000132704">
    <property type="expression patterns" value="Expressed in buccal mucosa cell and 88 other cell types or tissues"/>
</dbReference>
<dbReference type="GO" id="GO:0009986">
    <property type="term" value="C:cell surface"/>
    <property type="evidence" value="ECO:0000314"/>
    <property type="project" value="UniProtKB"/>
</dbReference>
<dbReference type="GO" id="GO:0009897">
    <property type="term" value="C:external side of plasma membrane"/>
    <property type="evidence" value="ECO:0000318"/>
    <property type="project" value="GO_Central"/>
</dbReference>
<dbReference type="GO" id="GO:0016020">
    <property type="term" value="C:membrane"/>
    <property type="evidence" value="ECO:0000303"/>
    <property type="project" value="UniProtKB"/>
</dbReference>
<dbReference type="GO" id="GO:0019903">
    <property type="term" value="F:protein phosphatase binding"/>
    <property type="evidence" value="ECO:0000353"/>
    <property type="project" value="UniProtKB"/>
</dbReference>
<dbReference type="GO" id="GO:0035591">
    <property type="term" value="F:signaling adaptor activity"/>
    <property type="evidence" value="ECO:0000314"/>
    <property type="project" value="UniProtKB"/>
</dbReference>
<dbReference type="GO" id="GO:0004888">
    <property type="term" value="F:transmembrane signaling receptor activity"/>
    <property type="evidence" value="ECO:0000318"/>
    <property type="project" value="GO_Central"/>
</dbReference>
<dbReference type="GO" id="GO:0007166">
    <property type="term" value="P:cell surface receptor signaling pathway"/>
    <property type="evidence" value="ECO:0000318"/>
    <property type="project" value="GO_Central"/>
</dbReference>
<dbReference type="GO" id="GO:0007267">
    <property type="term" value="P:cell-cell signaling"/>
    <property type="evidence" value="ECO:0000303"/>
    <property type="project" value="UniProtKB"/>
</dbReference>
<dbReference type="GO" id="GO:0006955">
    <property type="term" value="P:immune response"/>
    <property type="evidence" value="ECO:0000318"/>
    <property type="project" value="GO_Central"/>
</dbReference>
<dbReference type="CDD" id="cd00096">
    <property type="entry name" value="Ig"/>
    <property type="match status" value="2"/>
</dbReference>
<dbReference type="FunFam" id="2.60.40.10:FF:000357">
    <property type="entry name" value="Fc receptor like 1"/>
    <property type="match status" value="1"/>
</dbReference>
<dbReference type="FunFam" id="2.60.40.10:FF:000592">
    <property type="entry name" value="Fc receptor like 1"/>
    <property type="match status" value="1"/>
</dbReference>
<dbReference type="FunFam" id="2.60.40.10:FF:001308">
    <property type="entry name" value="Fc receptor like 4"/>
    <property type="match status" value="1"/>
</dbReference>
<dbReference type="FunFam" id="2.60.40.10:FF:000217">
    <property type="entry name" value="High affinity immunoglobulin gamma Fc receptor I"/>
    <property type="match status" value="1"/>
</dbReference>
<dbReference type="Gene3D" id="2.60.40.10">
    <property type="entry name" value="Immunoglobulins"/>
    <property type="match status" value="4"/>
</dbReference>
<dbReference type="InterPro" id="IPR007110">
    <property type="entry name" value="Ig-like_dom"/>
</dbReference>
<dbReference type="InterPro" id="IPR036179">
    <property type="entry name" value="Ig-like_dom_sf"/>
</dbReference>
<dbReference type="InterPro" id="IPR013783">
    <property type="entry name" value="Ig-like_fold"/>
</dbReference>
<dbReference type="InterPro" id="IPR050488">
    <property type="entry name" value="Ig_Fc_receptor"/>
</dbReference>
<dbReference type="InterPro" id="IPR003599">
    <property type="entry name" value="Ig_sub"/>
</dbReference>
<dbReference type="InterPro" id="IPR003598">
    <property type="entry name" value="Ig_sub2"/>
</dbReference>
<dbReference type="PANTHER" id="PTHR11481:SF60">
    <property type="entry name" value="IG-LIKE DOMAIN-CONTAINING PROTEIN"/>
    <property type="match status" value="1"/>
</dbReference>
<dbReference type="PANTHER" id="PTHR11481">
    <property type="entry name" value="IMMUNOGLOBULIN FC RECEPTOR"/>
    <property type="match status" value="1"/>
</dbReference>
<dbReference type="Pfam" id="PF13895">
    <property type="entry name" value="Ig_2"/>
    <property type="match status" value="2"/>
</dbReference>
<dbReference type="Pfam" id="PF13927">
    <property type="entry name" value="Ig_3"/>
    <property type="match status" value="1"/>
</dbReference>
<dbReference type="SMART" id="SM00409">
    <property type="entry name" value="IG"/>
    <property type="match status" value="4"/>
</dbReference>
<dbReference type="SMART" id="SM00408">
    <property type="entry name" value="IGc2"/>
    <property type="match status" value="4"/>
</dbReference>
<dbReference type="SUPFAM" id="SSF48726">
    <property type="entry name" value="Immunoglobulin"/>
    <property type="match status" value="4"/>
</dbReference>
<dbReference type="PROSITE" id="PS50835">
    <property type="entry name" value="IG_LIKE"/>
    <property type="match status" value="3"/>
</dbReference>
<keyword id="KW-0025">Alternative splicing</keyword>
<keyword id="KW-1003">Cell membrane</keyword>
<keyword id="KW-0903">Direct protein sequencing</keyword>
<keyword id="KW-1015">Disulfide bond</keyword>
<keyword id="KW-0325">Glycoprotein</keyword>
<keyword id="KW-0393">Immunoglobulin domain</keyword>
<keyword id="KW-0472">Membrane</keyword>
<keyword id="KW-1267">Proteomics identification</keyword>
<keyword id="KW-0675">Receptor</keyword>
<keyword id="KW-1185">Reference proteome</keyword>
<keyword id="KW-0677">Repeat</keyword>
<keyword id="KW-0732">Signal</keyword>
<keyword id="KW-0812">Transmembrane</keyword>
<keyword id="KW-1133">Transmembrane helix</keyword>
<gene>
    <name type="primary">FCRL2</name>
    <name type="synonym">FCRH2</name>
    <name type="synonym">IFGP4</name>
    <name type="synonym">IRTA4</name>
    <name type="synonym">SPAP1</name>
    <name type="ORF">UNQ9236/PRO31998</name>
</gene>
<sequence>MLLWSLLVIFDAVTEQADSLTLVAPSSVFEGDSIVLKCQGEQNWKIQKMAYHKDNKELSVFKKFSDFLIQSAVLSDSGNYFCSTKGQLFLWDKTSNIVKIKVQELFQRPVLTASSFQPIEGGPVSLKCETRLSPQRLDVQLQFCFFRENQVLGSGWSSSPELQISAVWSEDTGSYWCKAETVTHRIRKQSLQSQIHVQRIPISNVSLEIRAPGGQVTEGQKLILLCSVAGGTGNVTFSWYREATGTSMGKKTQRSLSAELEIPAVKESDAGKYYCRADNGHVPIQSKVVNIPVRIPVSRPVLTLRSPGAQAAVGDLLELHCEALRGSPPILYQFYHEDVTLGNSSAPSGGGASFNLSLTAEHSGNYSCEANNGLGAQCSEAVPVSISGPDGYRRDLMTAGVLWGLFGVLGFTGVALLLYALFHKISGESSATNEPRGASRPNPQEFTYSSPTPDMEELQPVYVNVGSVDVDVVYSQVWSMQQPESSANIRTLLENKDSQVIYSSVKKS</sequence>
<proteinExistence type="evidence at protein level"/>
<reference key="1">
    <citation type="journal article" date="2001" name="Proc. Natl. Acad. Sci. U.S.A.">
        <title>Identification of a family of Fc receptor homologs with preferential B cell expression.</title>
        <authorList>
            <person name="Davis R.S."/>
            <person name="Wang Y.-H."/>
            <person name="Kubagawa H."/>
            <person name="Cooper M.D."/>
        </authorList>
    </citation>
    <scope>NUCLEOTIDE SEQUENCE [MRNA] (ISOFORM 1)</scope>
    <scope>FUNCTION</scope>
    <scope>TISSUE SPECIFICITY</scope>
    <source>
        <tissue>Lymph node</tissue>
    </source>
</reference>
<reference key="2">
    <citation type="journal article" date="2001" name="Biochem. Biophys. Res. Commun.">
        <title>Molecular cloning and characterization of SPAP1, an inhibitory receptor.</title>
        <authorList>
            <person name="Xu M.-J."/>
            <person name="Zhao R."/>
            <person name="Zhao Z.J."/>
        </authorList>
    </citation>
    <scope>NUCLEOTIDE SEQUENCE [MRNA] (ISOFORMS 2; 3 AND 4)</scope>
    <scope>INTERACTION WITH PTPN6</scope>
    <scope>TISSUE SPECIFICITY</scope>
    <scope>PHOSPHORYLATION</scope>
    <scope>GLYCOSYLATION</scope>
</reference>
<reference key="3">
    <citation type="journal article" date="2002" name="Blood">
        <title>IRTAs: a new family of immunoglobulin-like receptors differentially expressed in B cells.</title>
        <authorList>
            <person name="Miller I."/>
            <person name="Hatzivassiliou G."/>
            <person name="Cattoretti G."/>
            <person name="Mendelsohn C."/>
            <person name="Dalla-Favera R."/>
        </authorList>
    </citation>
    <scope>NUCLEOTIDE SEQUENCE [MRNA] (ISOFORM 1)</scope>
    <scope>TISSUE SPECIFICITY</scope>
</reference>
<reference key="4">
    <citation type="journal article" date="2002" name="Immunogenetics">
        <title>A family of highly diverse human and mouse genes structurally links leukocyte FcR, gp42 and PECAM-1.</title>
        <authorList>
            <person name="Guselnikov S.V."/>
            <person name="Ershova S.A."/>
            <person name="Mechetina L.V."/>
            <person name="Najakshin A.M."/>
            <person name="Volkova O.Y."/>
            <person name="Alabyev B.Y."/>
            <person name="Taranin A.V."/>
        </authorList>
    </citation>
    <scope>NUCLEOTIDE SEQUENCE [MRNA] (ISOFORM 2)</scope>
    <source>
        <tissue>Tonsil</tissue>
    </source>
</reference>
<reference key="5">
    <citation type="submission" date="2006-10" db="EMBL/GenBank/DDBJ databases">
        <authorList>
            <person name="Livingston R.J."/>
            <person name="Shaffer T."/>
            <person name="McFarland I."/>
            <person name="Nguyen C.P."/>
            <person name="Stanaway I.B."/>
            <person name="Rajkumar N."/>
            <person name="Johnson E.J."/>
            <person name="da Ponte S.H."/>
            <person name="Willa H."/>
            <person name="Ahearn M.O."/>
            <person name="Bertucci C."/>
            <person name="Acklestad J."/>
            <person name="Carroll A."/>
            <person name="Swanson J."/>
            <person name="Gildersleeve H.I."/>
            <person name="Nickerson D.A."/>
        </authorList>
    </citation>
    <scope>NUCLEOTIDE SEQUENCE [GENOMIC DNA]</scope>
</reference>
<reference key="6">
    <citation type="journal article" date="2003" name="Genome Res.">
        <title>The secreted protein discovery initiative (SPDI), a large-scale effort to identify novel human secreted and transmembrane proteins: a bioinformatics assessment.</title>
        <authorList>
            <person name="Clark H.F."/>
            <person name="Gurney A.L."/>
            <person name="Abaya E."/>
            <person name="Baker K."/>
            <person name="Baldwin D.T."/>
            <person name="Brush J."/>
            <person name="Chen J."/>
            <person name="Chow B."/>
            <person name="Chui C."/>
            <person name="Crowley C."/>
            <person name="Currell B."/>
            <person name="Deuel B."/>
            <person name="Dowd P."/>
            <person name="Eaton D."/>
            <person name="Foster J.S."/>
            <person name="Grimaldi C."/>
            <person name="Gu Q."/>
            <person name="Hass P.E."/>
            <person name="Heldens S."/>
            <person name="Huang A."/>
            <person name="Kim H.S."/>
            <person name="Klimowski L."/>
            <person name="Jin Y."/>
            <person name="Johnson S."/>
            <person name="Lee J."/>
            <person name="Lewis L."/>
            <person name="Liao D."/>
            <person name="Mark M.R."/>
            <person name="Robbie E."/>
            <person name="Sanchez C."/>
            <person name="Schoenfeld J."/>
            <person name="Seshagiri S."/>
            <person name="Simmons L."/>
            <person name="Singh J."/>
            <person name="Smith V."/>
            <person name="Stinson J."/>
            <person name="Vagts A."/>
            <person name="Vandlen R.L."/>
            <person name="Watanabe C."/>
            <person name="Wieand D."/>
            <person name="Woods K."/>
            <person name="Xie M.-H."/>
            <person name="Yansura D.G."/>
            <person name="Yi S."/>
            <person name="Yu G."/>
            <person name="Yuan J."/>
            <person name="Zhang M."/>
            <person name="Zhang Z."/>
            <person name="Goddard A.D."/>
            <person name="Wood W.I."/>
            <person name="Godowski P.J."/>
            <person name="Gray A.M."/>
        </authorList>
    </citation>
    <scope>NUCLEOTIDE SEQUENCE [LARGE SCALE MRNA] (ISOFORM 1)</scope>
</reference>
<reference key="7">
    <citation type="journal article" date="2006" name="Nature">
        <title>The DNA sequence and biological annotation of human chromosome 1.</title>
        <authorList>
            <person name="Gregory S.G."/>
            <person name="Barlow K.F."/>
            <person name="McLay K.E."/>
            <person name="Kaul R."/>
            <person name="Swarbreck D."/>
            <person name="Dunham A."/>
            <person name="Scott C.E."/>
            <person name="Howe K.L."/>
            <person name="Woodfine K."/>
            <person name="Spencer C.C.A."/>
            <person name="Jones M.C."/>
            <person name="Gillson C."/>
            <person name="Searle S."/>
            <person name="Zhou Y."/>
            <person name="Kokocinski F."/>
            <person name="McDonald L."/>
            <person name="Evans R."/>
            <person name="Phillips K."/>
            <person name="Atkinson A."/>
            <person name="Cooper R."/>
            <person name="Jones C."/>
            <person name="Hall R.E."/>
            <person name="Andrews T.D."/>
            <person name="Lloyd C."/>
            <person name="Ainscough R."/>
            <person name="Almeida J.P."/>
            <person name="Ambrose K.D."/>
            <person name="Anderson F."/>
            <person name="Andrew R.W."/>
            <person name="Ashwell R.I.S."/>
            <person name="Aubin K."/>
            <person name="Babbage A.K."/>
            <person name="Bagguley C.L."/>
            <person name="Bailey J."/>
            <person name="Beasley H."/>
            <person name="Bethel G."/>
            <person name="Bird C.P."/>
            <person name="Bray-Allen S."/>
            <person name="Brown J.Y."/>
            <person name="Brown A.J."/>
            <person name="Buckley D."/>
            <person name="Burton J."/>
            <person name="Bye J."/>
            <person name="Carder C."/>
            <person name="Chapman J.C."/>
            <person name="Clark S.Y."/>
            <person name="Clarke G."/>
            <person name="Clee C."/>
            <person name="Cobley V."/>
            <person name="Collier R.E."/>
            <person name="Corby N."/>
            <person name="Coville G.J."/>
            <person name="Davies J."/>
            <person name="Deadman R."/>
            <person name="Dunn M."/>
            <person name="Earthrowl M."/>
            <person name="Ellington A.G."/>
            <person name="Errington H."/>
            <person name="Frankish A."/>
            <person name="Frankland J."/>
            <person name="French L."/>
            <person name="Garner P."/>
            <person name="Garnett J."/>
            <person name="Gay L."/>
            <person name="Ghori M.R.J."/>
            <person name="Gibson R."/>
            <person name="Gilby L.M."/>
            <person name="Gillett W."/>
            <person name="Glithero R.J."/>
            <person name="Grafham D.V."/>
            <person name="Griffiths C."/>
            <person name="Griffiths-Jones S."/>
            <person name="Grocock R."/>
            <person name="Hammond S."/>
            <person name="Harrison E.S.I."/>
            <person name="Hart E."/>
            <person name="Haugen E."/>
            <person name="Heath P.D."/>
            <person name="Holmes S."/>
            <person name="Holt K."/>
            <person name="Howden P.J."/>
            <person name="Hunt A.R."/>
            <person name="Hunt S.E."/>
            <person name="Hunter G."/>
            <person name="Isherwood J."/>
            <person name="James R."/>
            <person name="Johnson C."/>
            <person name="Johnson D."/>
            <person name="Joy A."/>
            <person name="Kay M."/>
            <person name="Kershaw J.K."/>
            <person name="Kibukawa M."/>
            <person name="Kimberley A.M."/>
            <person name="King A."/>
            <person name="Knights A.J."/>
            <person name="Lad H."/>
            <person name="Laird G."/>
            <person name="Lawlor S."/>
            <person name="Leongamornlert D.A."/>
            <person name="Lloyd D.M."/>
            <person name="Loveland J."/>
            <person name="Lovell J."/>
            <person name="Lush M.J."/>
            <person name="Lyne R."/>
            <person name="Martin S."/>
            <person name="Mashreghi-Mohammadi M."/>
            <person name="Matthews L."/>
            <person name="Matthews N.S.W."/>
            <person name="McLaren S."/>
            <person name="Milne S."/>
            <person name="Mistry S."/>
            <person name="Moore M.J.F."/>
            <person name="Nickerson T."/>
            <person name="O'Dell C.N."/>
            <person name="Oliver K."/>
            <person name="Palmeiri A."/>
            <person name="Palmer S.A."/>
            <person name="Parker A."/>
            <person name="Patel D."/>
            <person name="Pearce A.V."/>
            <person name="Peck A.I."/>
            <person name="Pelan S."/>
            <person name="Phelps K."/>
            <person name="Phillimore B.J."/>
            <person name="Plumb R."/>
            <person name="Rajan J."/>
            <person name="Raymond C."/>
            <person name="Rouse G."/>
            <person name="Saenphimmachak C."/>
            <person name="Sehra H.K."/>
            <person name="Sheridan E."/>
            <person name="Shownkeen R."/>
            <person name="Sims S."/>
            <person name="Skuce C.D."/>
            <person name="Smith M."/>
            <person name="Steward C."/>
            <person name="Subramanian S."/>
            <person name="Sycamore N."/>
            <person name="Tracey A."/>
            <person name="Tromans A."/>
            <person name="Van Helmond Z."/>
            <person name="Wall M."/>
            <person name="Wallis J.M."/>
            <person name="White S."/>
            <person name="Whitehead S.L."/>
            <person name="Wilkinson J.E."/>
            <person name="Willey D.L."/>
            <person name="Williams H."/>
            <person name="Wilming L."/>
            <person name="Wray P.W."/>
            <person name="Wu Z."/>
            <person name="Coulson A."/>
            <person name="Vaudin M."/>
            <person name="Sulston J.E."/>
            <person name="Durbin R.M."/>
            <person name="Hubbard T."/>
            <person name="Wooster R."/>
            <person name="Dunham I."/>
            <person name="Carter N.P."/>
            <person name="McVean G."/>
            <person name="Ross M.T."/>
            <person name="Harrow J."/>
            <person name="Olson M.V."/>
            <person name="Beck S."/>
            <person name="Rogers J."/>
            <person name="Bentley D.R."/>
        </authorList>
    </citation>
    <scope>NUCLEOTIDE SEQUENCE [LARGE SCALE GENOMIC DNA]</scope>
</reference>
<reference key="8">
    <citation type="submission" date="2005-09" db="EMBL/GenBank/DDBJ databases">
        <authorList>
            <person name="Mural R.J."/>
            <person name="Istrail S."/>
            <person name="Sutton G.G."/>
            <person name="Florea L."/>
            <person name="Halpern A.L."/>
            <person name="Mobarry C.M."/>
            <person name="Lippert R."/>
            <person name="Walenz B."/>
            <person name="Shatkay H."/>
            <person name="Dew I."/>
            <person name="Miller J.R."/>
            <person name="Flanigan M.J."/>
            <person name="Edwards N.J."/>
            <person name="Bolanos R."/>
            <person name="Fasulo D."/>
            <person name="Halldorsson B.V."/>
            <person name="Hannenhalli S."/>
            <person name="Turner R."/>
            <person name="Yooseph S."/>
            <person name="Lu F."/>
            <person name="Nusskern D.R."/>
            <person name="Shue B.C."/>
            <person name="Zheng X.H."/>
            <person name="Zhong F."/>
            <person name="Delcher A.L."/>
            <person name="Huson D.H."/>
            <person name="Kravitz S.A."/>
            <person name="Mouchard L."/>
            <person name="Reinert K."/>
            <person name="Remington K.A."/>
            <person name="Clark A.G."/>
            <person name="Waterman M.S."/>
            <person name="Eichler E.E."/>
            <person name="Adams M.D."/>
            <person name="Hunkapiller M.W."/>
            <person name="Myers E.W."/>
            <person name="Venter J.C."/>
        </authorList>
    </citation>
    <scope>NUCLEOTIDE SEQUENCE [LARGE SCALE GENOMIC DNA]</scope>
</reference>
<reference key="9">
    <citation type="journal article" date="2004" name="Genome Res.">
        <title>The status, quality, and expansion of the NIH full-length cDNA project: the Mammalian Gene Collection (MGC).</title>
        <authorList>
            <consortium name="The MGC Project Team"/>
        </authorList>
    </citation>
    <scope>NUCLEOTIDE SEQUENCE [LARGE SCALE MRNA] (ISOFORMS 2 AND 5)</scope>
</reference>
<reference key="10">
    <citation type="journal article" date="2004" name="Protein Sci.">
        <title>Signal peptide prediction based on analysis of experimentally verified cleavage sites.</title>
        <authorList>
            <person name="Zhang Z."/>
            <person name="Henzel W.J."/>
        </authorList>
    </citation>
    <scope>PROTEIN SEQUENCE OF 20-34</scope>
</reference>
<reference key="11">
    <citation type="journal article" date="2006" name="Int. Immunol.">
        <title>Expression pattern of the human FcRH/IRTA receptors in normal tissue and in B-chronic lymphocytic leukemia.</title>
        <authorList>
            <person name="Polson A.G."/>
            <person name="Zheng B."/>
            <person name="Elkins K."/>
            <person name="Chang W."/>
            <person name="Du C."/>
            <person name="Dowd P."/>
            <person name="Yen L."/>
            <person name="Tan C."/>
            <person name="Hongo J.-A."/>
            <person name="Koeppen H."/>
            <person name="Ebens A."/>
        </authorList>
    </citation>
    <scope>SUBCELLULAR LOCATION</scope>
    <scope>TISSUE SPECIFICITY</scope>
</reference>
<name>FCRL2_HUMAN</name>
<organism>
    <name type="scientific">Homo sapiens</name>
    <name type="common">Human</name>
    <dbReference type="NCBI Taxonomy" id="9606"/>
    <lineage>
        <taxon>Eukaryota</taxon>
        <taxon>Metazoa</taxon>
        <taxon>Chordata</taxon>
        <taxon>Craniata</taxon>
        <taxon>Vertebrata</taxon>
        <taxon>Euteleostomi</taxon>
        <taxon>Mammalia</taxon>
        <taxon>Eutheria</taxon>
        <taxon>Euarchontoglires</taxon>
        <taxon>Primates</taxon>
        <taxon>Haplorrhini</taxon>
        <taxon>Catarrhini</taxon>
        <taxon>Hominidae</taxon>
        <taxon>Homo</taxon>
    </lineage>
</organism>
<comment type="function">
    <text evidence="5">May have an regulatory role in normal and neoplastic B cell development.</text>
</comment>
<comment type="subunit">
    <text evidence="4">The tyrosine-phosphorylated isoform 2 interacts with PTPN6.</text>
</comment>
<comment type="interaction">
    <interactant intactId="EBI-10185081">
        <id>Q96LA5</id>
    </interactant>
    <interactant intactId="EBI-2214155">
        <id>P50579</id>
        <label>METAP2</label>
    </interactant>
    <organismsDiffer>false</organismsDiffer>
    <experiments>2</experiments>
</comment>
<comment type="interaction">
    <interactant intactId="EBI-10185081">
        <id>Q96LA5</id>
    </interactant>
    <interactant intactId="EBI-713635">
        <id>O43639</id>
        <label>NCK2</label>
    </interactant>
    <organismsDiffer>false</organismsDiffer>
    <experiments>3</experiments>
</comment>
<comment type="interaction">
    <interactant intactId="EBI-17263163">
        <id>Q96LA5-2</id>
    </interactant>
    <interactant intactId="EBI-10266796">
        <id>Q8N5M9</id>
        <label>JAGN1</label>
    </interactant>
    <organismsDiffer>false</organismsDiffer>
    <experiments>3</experiments>
</comment>
<comment type="interaction">
    <interactant intactId="EBI-17263163">
        <id>Q96LA5-2</id>
    </interactant>
    <interactant intactId="EBI-3932027">
        <id>P21145</id>
        <label>MAL</label>
    </interactant>
    <organismsDiffer>false</organismsDiffer>
    <experiments>3</experiments>
</comment>
<comment type="interaction">
    <interactant intactId="EBI-17263163">
        <id>Q96LA5-2</id>
    </interactant>
    <interactant intactId="EBI-12188331">
        <id>P60201-2</id>
        <label>PLP1</label>
    </interactant>
    <organismsDiffer>false</organismsDiffer>
    <experiments>3</experiments>
</comment>
<comment type="interaction">
    <interactant intactId="EBI-17263163">
        <id>Q96LA5-2</id>
    </interactant>
    <interactant intactId="EBI-10268111">
        <id>Q8N966</id>
        <label>ZDHHC22</label>
    </interactant>
    <organismsDiffer>false</organismsDiffer>
    <experiments>3</experiments>
</comment>
<comment type="subcellular location">
    <subcellularLocation>
        <location evidence="8">Cell membrane</location>
        <topology evidence="8">Single-pass type I membrane protein</topology>
    </subcellularLocation>
</comment>
<comment type="alternative products">
    <event type="alternative splicing"/>
    <isoform>
        <id>Q96LA5-1</id>
        <name>1</name>
        <sequence type="displayed"/>
    </isoform>
    <isoform>
        <id>Q96LA5-2</id>
        <name>2</name>
        <name>SPAP1A</name>
        <sequence type="described" ref="VSP_014111 VSP_014112"/>
    </isoform>
    <isoform>
        <id>Q96LA5-3</id>
        <name>3</name>
        <name>SPAP1B</name>
        <sequence type="described" ref="VSP_014111 VSP_014112 VSP_014116 VSP_014117"/>
    </isoform>
    <isoform>
        <id>Q96LA5-4</id>
        <name>4</name>
        <name>SPAP1C</name>
        <sequence type="described" ref="VSP_014111 VSP_014112 VSP_014114 VSP_014115"/>
    </isoform>
    <isoform>
        <id>Q96LA5-5</id>
        <name>5</name>
        <sequence type="described" ref="VSP_014113 VSP_014118"/>
    </isoform>
</comment>
<comment type="tissue specificity">
    <text evidence="4 5 6 8">Expressed in the secondary lymphoid organs, spleen and lymph node. Expression is limited to the mature B-cell lines. Highly expressed in CD19 and within the mantle zones of the tonsil tissue. Isoform 2 is expressed in the spleen, peripheral blood and bone marrow. Isoform 2 and isoform 4 are expressed in B-cell lines. Preferentially expressed in memory B-cells (at protein level).</text>
</comment>
<comment type="domain">
    <text>Contains 2 copies of a cytoplasmic motif that is referred to as the immunoreceptor tyrosine-based inhibitor motif (ITIM). The phosphorylated ITIM motif bind the SH2 domain of PTPN6.</text>
</comment>
<comment type="PTM">
    <text evidence="4">Isoform 2 is N- and O-glycosylated, and phosphorylated.</text>
</comment>
<evidence type="ECO:0000255" key="1"/>
<evidence type="ECO:0000255" key="2">
    <source>
        <dbReference type="PROSITE-ProRule" id="PRU00114"/>
    </source>
</evidence>
<evidence type="ECO:0000256" key="3">
    <source>
        <dbReference type="SAM" id="MobiDB-lite"/>
    </source>
</evidence>
<evidence type="ECO:0000269" key="4">
    <source>
    </source>
</evidence>
<evidence type="ECO:0000269" key="5">
    <source>
    </source>
</evidence>
<evidence type="ECO:0000269" key="6">
    <source>
    </source>
</evidence>
<evidence type="ECO:0000269" key="7">
    <source>
    </source>
</evidence>
<evidence type="ECO:0000269" key="8">
    <source>
    </source>
</evidence>
<evidence type="ECO:0000303" key="9">
    <source>
    </source>
</evidence>
<evidence type="ECO:0000303" key="10">
    <source>
    </source>
</evidence>
<evidence type="ECO:0000303" key="11">
    <source>
    </source>
</evidence>
<protein>
    <recommendedName>
        <fullName>Fc receptor-like protein 2</fullName>
        <shortName>FcR-like protein 2</shortName>
        <shortName>FcRL2</shortName>
    </recommendedName>
    <alternativeName>
        <fullName>Fc receptor homolog 2</fullName>
        <shortName>FcRH2</shortName>
    </alternativeName>
    <alternativeName>
        <fullName>IFGP family protein 4</fullName>
    </alternativeName>
    <alternativeName>
        <fullName>Immunoglobulin receptor translocation-associated protein 4</fullName>
    </alternativeName>
    <alternativeName>
        <fullName>SH2 domain-containing phosphatase anchor protein 1</fullName>
    </alternativeName>
    <cdAntigenName>CD307b</cdAntigenName>
</protein>
<feature type="signal peptide" evidence="7">
    <location>
        <begin position="1"/>
        <end position="19"/>
    </location>
</feature>
<feature type="chain" id="PRO_0000014761" description="Fc receptor-like protein 2">
    <location>
        <begin position="20"/>
        <end position="508"/>
    </location>
</feature>
<feature type="topological domain" description="Extracellular" evidence="1">
    <location>
        <begin position="20"/>
        <end position="401"/>
    </location>
</feature>
<feature type="transmembrane region" description="Helical" evidence="1">
    <location>
        <begin position="402"/>
        <end position="422"/>
    </location>
</feature>
<feature type="topological domain" description="Cytoplasmic" evidence="1">
    <location>
        <begin position="423"/>
        <end position="508"/>
    </location>
</feature>
<feature type="domain" description="Ig-like C2-type 1">
    <location>
        <begin position="20"/>
        <end position="98"/>
    </location>
</feature>
<feature type="domain" description="Ig-like C2-type 2">
    <location>
        <begin position="109"/>
        <end position="187"/>
    </location>
</feature>
<feature type="domain" description="Ig-like C2-type 3">
    <location>
        <begin position="201"/>
        <end position="290"/>
    </location>
</feature>
<feature type="domain" description="Ig-like C2-type 4">
    <location>
        <begin position="300"/>
        <end position="387"/>
    </location>
</feature>
<feature type="region of interest" description="Disordered" evidence="3">
    <location>
        <begin position="429"/>
        <end position="453"/>
    </location>
</feature>
<feature type="short sequence motif" description="ITIM motif 1">
    <location>
        <begin position="446"/>
        <end position="451"/>
    </location>
</feature>
<feature type="short sequence motif" description="ITIM motif 2">
    <location>
        <begin position="460"/>
        <end position="465"/>
    </location>
</feature>
<feature type="short sequence motif" description="ITIM motif 3">
    <location>
        <begin position="472"/>
        <end position="477"/>
    </location>
</feature>
<feature type="short sequence motif" description="ITIM motif 4">
    <location>
        <begin position="500"/>
        <end position="505"/>
    </location>
</feature>
<feature type="compositionally biased region" description="Polar residues" evidence="3">
    <location>
        <begin position="441"/>
        <end position="452"/>
    </location>
</feature>
<feature type="glycosylation site" description="N-linked (GlcNAc...) asparagine" evidence="1">
    <location>
        <position position="204"/>
    </location>
</feature>
<feature type="glycosylation site" description="N-linked (GlcNAc...) asparagine" evidence="1">
    <location>
        <position position="234"/>
    </location>
</feature>
<feature type="glycosylation site" description="N-linked (GlcNAc...) asparagine" evidence="1">
    <location>
        <position position="343"/>
    </location>
</feature>
<feature type="glycosylation site" description="N-linked (GlcNAc...) asparagine" evidence="1">
    <location>
        <position position="355"/>
    </location>
</feature>
<feature type="glycosylation site" description="N-linked (GlcNAc...) asparagine" evidence="1">
    <location>
        <position position="365"/>
    </location>
</feature>
<feature type="disulfide bond" evidence="2">
    <location>
        <begin position="128"/>
        <end position="177"/>
    </location>
</feature>
<feature type="disulfide bond" evidence="2">
    <location>
        <begin position="226"/>
        <end position="275"/>
    </location>
</feature>
<feature type="disulfide bond" evidence="2">
    <location>
        <begin position="321"/>
        <end position="368"/>
    </location>
</feature>
<feature type="splice variant" id="VSP_014111" description="In isoform 2, isoform 3 and isoform 4." evidence="9 10 11">
    <location>
        <begin position="1"/>
        <end position="253"/>
    </location>
</feature>
<feature type="splice variant" id="VSP_014113" description="In isoform 5." evidence="11">
    <location>
        <begin position="104"/>
        <end position="387"/>
    </location>
</feature>
<feature type="splice variant" id="VSP_014112" description="In isoform 2, isoform 3 and isoform 4." evidence="9 10 11">
    <original>RSLSAELEIPAVKESDAGKYYCRADNGHVPIQSKVVNIPVRI</original>
    <variation>MWEWKICNSHGARPFAEPAGWEFVNLLRHHKSFLIAPLCLSV</variation>
    <location>
        <begin position="254"/>
        <end position="295"/>
    </location>
</feature>
<feature type="splice variant" id="VSP_014114" description="In isoform 4." evidence="9">
    <original>PDGYRRDLM</original>
    <variation>GWVLPGYRV</variation>
    <location>
        <begin position="389"/>
        <end position="397"/>
    </location>
</feature>
<feature type="splice variant" id="VSP_014115" description="In isoform 4." evidence="9">
    <location>
        <begin position="398"/>
        <end position="508"/>
    </location>
</feature>
<feature type="splice variant" id="VSP_014116" description="In isoform 3." evidence="9">
    <original>ESSATNEPRGASRPNPQE</original>
    <variation>CIYHLDSPYFAMTFPLLI</variation>
    <location>
        <begin position="428"/>
        <end position="445"/>
    </location>
</feature>
<feature type="splice variant" id="VSP_014117" description="In isoform 3." evidence="9">
    <location>
        <begin position="446"/>
        <end position="508"/>
    </location>
</feature>
<feature type="splice variant" id="VSP_014118" description="In isoform 5." evidence="11">
    <location>
        <begin position="465"/>
        <end position="486"/>
    </location>
</feature>
<feature type="sequence variant" id="VAR_049873" description="In dbSNP:rs16839100.">
    <original>I</original>
    <variation>N</variation>
    <location>
        <position position="202"/>
    </location>
</feature>
<accession>Q96LA5</accession>
<accession>A0N0M5</accession>
<accession>A1L307</accession>
<accession>A6NMS0</accession>
<accession>Q6NTA1</accession>
<accession>Q9BZI4</accession>
<accession>Q9BZI5</accession>
<accession>Q9BZI6</accession>